<evidence type="ECO:0000255" key="1">
    <source>
        <dbReference type="HAMAP-Rule" id="MF_00489"/>
    </source>
</evidence>
<dbReference type="EMBL" id="CP001139">
    <property type="protein sequence ID" value="ACH65261.1"/>
    <property type="molecule type" value="Genomic_DNA"/>
</dbReference>
<dbReference type="RefSeq" id="WP_012532929.1">
    <property type="nucleotide sequence ID" value="NC_011184.1"/>
</dbReference>
<dbReference type="SMR" id="B5FAU4"/>
<dbReference type="KEGG" id="vfm:VFMJ11_0615"/>
<dbReference type="HOGENOM" id="CLU_106619_2_1_6"/>
<dbReference type="Proteomes" id="UP000001857">
    <property type="component" value="Chromosome I"/>
</dbReference>
<dbReference type="CDD" id="cd18720">
    <property type="entry name" value="PIN_YqxD-like"/>
    <property type="match status" value="1"/>
</dbReference>
<dbReference type="HAMAP" id="MF_00489">
    <property type="entry name" value="UPF0178"/>
    <property type="match status" value="1"/>
</dbReference>
<dbReference type="InterPro" id="IPR003791">
    <property type="entry name" value="UPF0178"/>
</dbReference>
<dbReference type="NCBIfam" id="NF001095">
    <property type="entry name" value="PRK00124.1"/>
    <property type="match status" value="1"/>
</dbReference>
<dbReference type="PANTHER" id="PTHR35146">
    <property type="entry name" value="UPF0178 PROTEIN YAII"/>
    <property type="match status" value="1"/>
</dbReference>
<dbReference type="PANTHER" id="PTHR35146:SF1">
    <property type="entry name" value="UPF0178 PROTEIN YAII"/>
    <property type="match status" value="1"/>
</dbReference>
<dbReference type="Pfam" id="PF02639">
    <property type="entry name" value="DUF188"/>
    <property type="match status" value="1"/>
</dbReference>
<protein>
    <recommendedName>
        <fullName evidence="1">UPF0178 protein VFMJ11_0615</fullName>
    </recommendedName>
</protein>
<proteinExistence type="inferred from homology"/>
<gene>
    <name type="ordered locus">VFMJ11_0615</name>
</gene>
<comment type="similarity">
    <text evidence="1">Belongs to the UPF0178 family.</text>
</comment>
<reference key="1">
    <citation type="submission" date="2008-08" db="EMBL/GenBank/DDBJ databases">
        <title>Complete sequence of Vibrio fischeri strain MJ11.</title>
        <authorList>
            <person name="Mandel M.J."/>
            <person name="Stabb E.V."/>
            <person name="Ruby E.G."/>
            <person name="Ferriera S."/>
            <person name="Johnson J."/>
            <person name="Kravitz S."/>
            <person name="Beeson K."/>
            <person name="Sutton G."/>
            <person name="Rogers Y.-H."/>
            <person name="Friedman R."/>
            <person name="Frazier M."/>
            <person name="Venter J.C."/>
        </authorList>
    </citation>
    <scope>NUCLEOTIDE SEQUENCE [LARGE SCALE GENOMIC DNA]</scope>
    <source>
        <strain>MJ11</strain>
    </source>
</reference>
<organism>
    <name type="scientific">Aliivibrio fischeri (strain MJ11)</name>
    <name type="common">Vibrio fischeri</name>
    <dbReference type="NCBI Taxonomy" id="388396"/>
    <lineage>
        <taxon>Bacteria</taxon>
        <taxon>Pseudomonadati</taxon>
        <taxon>Pseudomonadota</taxon>
        <taxon>Gammaproteobacteria</taxon>
        <taxon>Vibrionales</taxon>
        <taxon>Vibrionaceae</taxon>
        <taxon>Aliivibrio</taxon>
    </lineage>
</organism>
<sequence>MQIWVDADACPKVVKEVLFRAATRTGIKLTLVANHYIPVPSAANIRSMQVEAGFDVADDEIVKRSEAGDLVISADIPLAAELIEKKVQVLNPRGELYTEATIKARLNIRDFMDTMRASGIQTGGPAPLSQTERREFANQLDRILAKAKI</sequence>
<feature type="chain" id="PRO_1000126217" description="UPF0178 protein VFMJ11_0615">
    <location>
        <begin position="1"/>
        <end position="149"/>
    </location>
</feature>
<accession>B5FAU4</accession>
<name>Y615_ALIFM</name>